<feature type="chain" id="PRO_0000306733" description="Small ribosomal subunit protein uS13">
    <location>
        <begin position="1"/>
        <end position="125"/>
    </location>
</feature>
<feature type="region of interest" description="Disordered" evidence="2">
    <location>
        <begin position="93"/>
        <end position="125"/>
    </location>
</feature>
<feature type="compositionally biased region" description="Basic residues" evidence="2">
    <location>
        <begin position="101"/>
        <end position="125"/>
    </location>
</feature>
<evidence type="ECO:0000255" key="1">
    <source>
        <dbReference type="HAMAP-Rule" id="MF_01315"/>
    </source>
</evidence>
<evidence type="ECO:0000256" key="2">
    <source>
        <dbReference type="SAM" id="MobiDB-lite"/>
    </source>
</evidence>
<evidence type="ECO:0000305" key="3"/>
<proteinExistence type="inferred from homology"/>
<sequence length="125" mass="13979">MARIAGVDLPRDKRAEIGLTYIYGIGPTRAKEILAKTGVSPDTRIKDLNDSEVAALRQVVENDYQVEGDLRRLEAMSIKRLMDIGTVRGRRHRAGLPVRGQRTRTNARTRRGARKTVAGKKKATR</sequence>
<name>RS13_SYNE7</name>
<accession>Q31L28</accession>
<reference key="1">
    <citation type="submission" date="2005-08" db="EMBL/GenBank/DDBJ databases">
        <title>Complete sequence of chromosome 1 of Synechococcus elongatus PCC 7942.</title>
        <authorList>
            <consortium name="US DOE Joint Genome Institute"/>
            <person name="Copeland A."/>
            <person name="Lucas S."/>
            <person name="Lapidus A."/>
            <person name="Barry K."/>
            <person name="Detter J.C."/>
            <person name="Glavina T."/>
            <person name="Hammon N."/>
            <person name="Israni S."/>
            <person name="Pitluck S."/>
            <person name="Schmutz J."/>
            <person name="Larimer F."/>
            <person name="Land M."/>
            <person name="Kyrpides N."/>
            <person name="Lykidis A."/>
            <person name="Golden S."/>
            <person name="Richardson P."/>
        </authorList>
    </citation>
    <scope>NUCLEOTIDE SEQUENCE [LARGE SCALE GENOMIC DNA]</scope>
    <source>
        <strain>ATCC 33912 / PCC 7942 / FACHB-805</strain>
    </source>
</reference>
<dbReference type="EMBL" id="CP000100">
    <property type="protein sequence ID" value="ABB58241.1"/>
    <property type="molecule type" value="Genomic_DNA"/>
</dbReference>
<dbReference type="RefSeq" id="WP_011244196.1">
    <property type="nucleotide sequence ID" value="NZ_JACJTX010000001.1"/>
</dbReference>
<dbReference type="SMR" id="Q31L28"/>
<dbReference type="STRING" id="1140.Synpcc7942_2211"/>
<dbReference type="PaxDb" id="1140-Synpcc7942_2211"/>
<dbReference type="GeneID" id="72431094"/>
<dbReference type="KEGG" id="syf:Synpcc7942_2211"/>
<dbReference type="eggNOG" id="COG0099">
    <property type="taxonomic scope" value="Bacteria"/>
</dbReference>
<dbReference type="HOGENOM" id="CLU_103849_1_2_3"/>
<dbReference type="OrthoDB" id="9803610at2"/>
<dbReference type="BioCyc" id="SYNEL:SYNPCC7942_2211-MONOMER"/>
<dbReference type="Proteomes" id="UP000889800">
    <property type="component" value="Chromosome"/>
</dbReference>
<dbReference type="GO" id="GO:0005829">
    <property type="term" value="C:cytosol"/>
    <property type="evidence" value="ECO:0007669"/>
    <property type="project" value="TreeGrafter"/>
</dbReference>
<dbReference type="GO" id="GO:0015935">
    <property type="term" value="C:small ribosomal subunit"/>
    <property type="evidence" value="ECO:0007669"/>
    <property type="project" value="TreeGrafter"/>
</dbReference>
<dbReference type="GO" id="GO:0019843">
    <property type="term" value="F:rRNA binding"/>
    <property type="evidence" value="ECO:0007669"/>
    <property type="project" value="UniProtKB-UniRule"/>
</dbReference>
<dbReference type="GO" id="GO:0003735">
    <property type="term" value="F:structural constituent of ribosome"/>
    <property type="evidence" value="ECO:0007669"/>
    <property type="project" value="InterPro"/>
</dbReference>
<dbReference type="GO" id="GO:0000049">
    <property type="term" value="F:tRNA binding"/>
    <property type="evidence" value="ECO:0007669"/>
    <property type="project" value="UniProtKB-UniRule"/>
</dbReference>
<dbReference type="GO" id="GO:0006412">
    <property type="term" value="P:translation"/>
    <property type="evidence" value="ECO:0007669"/>
    <property type="project" value="UniProtKB-UniRule"/>
</dbReference>
<dbReference type="FunFam" id="1.10.8.50:FF:000001">
    <property type="entry name" value="30S ribosomal protein S13"/>
    <property type="match status" value="1"/>
</dbReference>
<dbReference type="FunFam" id="4.10.910.10:FF:000001">
    <property type="entry name" value="30S ribosomal protein S13"/>
    <property type="match status" value="1"/>
</dbReference>
<dbReference type="Gene3D" id="1.10.8.50">
    <property type="match status" value="1"/>
</dbReference>
<dbReference type="Gene3D" id="4.10.910.10">
    <property type="entry name" value="30s ribosomal protein s13, domain 2"/>
    <property type="match status" value="1"/>
</dbReference>
<dbReference type="HAMAP" id="MF_01315">
    <property type="entry name" value="Ribosomal_uS13"/>
    <property type="match status" value="1"/>
</dbReference>
<dbReference type="InterPro" id="IPR027437">
    <property type="entry name" value="Rbsml_uS13_C"/>
</dbReference>
<dbReference type="InterPro" id="IPR001892">
    <property type="entry name" value="Ribosomal_uS13"/>
</dbReference>
<dbReference type="InterPro" id="IPR010979">
    <property type="entry name" value="Ribosomal_uS13-like_H2TH"/>
</dbReference>
<dbReference type="InterPro" id="IPR019980">
    <property type="entry name" value="Ribosomal_uS13_bac-type"/>
</dbReference>
<dbReference type="InterPro" id="IPR018269">
    <property type="entry name" value="Ribosomal_uS13_CS"/>
</dbReference>
<dbReference type="NCBIfam" id="TIGR03631">
    <property type="entry name" value="uS13_bact"/>
    <property type="match status" value="1"/>
</dbReference>
<dbReference type="PANTHER" id="PTHR10871">
    <property type="entry name" value="30S RIBOSOMAL PROTEIN S13/40S RIBOSOMAL PROTEIN S18"/>
    <property type="match status" value="1"/>
</dbReference>
<dbReference type="PANTHER" id="PTHR10871:SF1">
    <property type="entry name" value="SMALL RIBOSOMAL SUBUNIT PROTEIN US13M"/>
    <property type="match status" value="1"/>
</dbReference>
<dbReference type="Pfam" id="PF00416">
    <property type="entry name" value="Ribosomal_S13"/>
    <property type="match status" value="1"/>
</dbReference>
<dbReference type="PIRSF" id="PIRSF002134">
    <property type="entry name" value="Ribosomal_S13"/>
    <property type="match status" value="1"/>
</dbReference>
<dbReference type="SUPFAM" id="SSF46946">
    <property type="entry name" value="S13-like H2TH domain"/>
    <property type="match status" value="1"/>
</dbReference>
<dbReference type="PROSITE" id="PS00646">
    <property type="entry name" value="RIBOSOMAL_S13_1"/>
    <property type="match status" value="1"/>
</dbReference>
<dbReference type="PROSITE" id="PS50159">
    <property type="entry name" value="RIBOSOMAL_S13_2"/>
    <property type="match status" value="1"/>
</dbReference>
<keyword id="KW-1185">Reference proteome</keyword>
<keyword id="KW-0687">Ribonucleoprotein</keyword>
<keyword id="KW-0689">Ribosomal protein</keyword>
<keyword id="KW-0694">RNA-binding</keyword>
<keyword id="KW-0699">rRNA-binding</keyword>
<keyword id="KW-0820">tRNA-binding</keyword>
<comment type="function">
    <text evidence="1">Located at the top of the head of the 30S subunit, it contacts several helices of the 16S rRNA. In the 70S ribosome it contacts the 23S rRNA (bridge B1a) and protein L5 of the 50S subunit (bridge B1b), connecting the 2 subunits; these bridges are implicated in subunit movement. Contacts the tRNAs in the A and P-sites.</text>
</comment>
<comment type="subunit">
    <text evidence="1">Part of the 30S ribosomal subunit. Forms a loose heterodimer with protein S19. Forms two bridges to the 50S subunit in the 70S ribosome.</text>
</comment>
<comment type="similarity">
    <text evidence="1">Belongs to the universal ribosomal protein uS13 family.</text>
</comment>
<protein>
    <recommendedName>
        <fullName evidence="1">Small ribosomal subunit protein uS13</fullName>
    </recommendedName>
    <alternativeName>
        <fullName evidence="3">30S ribosomal protein S13</fullName>
    </alternativeName>
</protein>
<gene>
    <name evidence="1" type="primary">rpsM</name>
    <name evidence="1" type="synonym">rps13</name>
    <name type="ordered locus">Synpcc7942_2211</name>
</gene>
<organism>
    <name type="scientific">Synechococcus elongatus (strain ATCC 33912 / PCC 7942 / FACHB-805)</name>
    <name type="common">Anacystis nidulans R2</name>
    <dbReference type="NCBI Taxonomy" id="1140"/>
    <lineage>
        <taxon>Bacteria</taxon>
        <taxon>Bacillati</taxon>
        <taxon>Cyanobacteriota</taxon>
        <taxon>Cyanophyceae</taxon>
        <taxon>Synechococcales</taxon>
        <taxon>Synechococcaceae</taxon>
        <taxon>Synechococcus</taxon>
    </lineage>
</organism>